<feature type="signal peptide" evidence="1">
    <location>
        <begin position="1"/>
        <end position="24"/>
    </location>
</feature>
<feature type="chain" id="PRO_0000022559" description="Treponemal membrane protein B">
    <location>
        <begin position="25"/>
        <end position="325"/>
    </location>
</feature>
<feature type="repeat" description="EAARKAAE">
    <location>
        <begin position="159"/>
        <end position="166"/>
    </location>
</feature>
<feature type="repeat" description="ARKLEEQRIAAQKAQEERKRAEE">
    <location>
        <begin position="167"/>
        <end position="189"/>
    </location>
</feature>
<feature type="repeat" description="EAARKAAE">
    <location>
        <begin position="190"/>
        <end position="197"/>
    </location>
</feature>
<feature type="repeat" description="ARKLEEQRIAAQKAQEERKRAEE">
    <location>
        <begin position="198"/>
        <end position="220"/>
    </location>
</feature>
<feature type="repeat" description="EAARKAAE">
    <location>
        <begin position="221"/>
        <end position="228"/>
    </location>
</feature>
<feature type="repeat" description="EAARKAEE">
    <location>
        <begin position="229"/>
        <end position="236"/>
    </location>
</feature>
<feature type="region of interest" description="Disordered" evidence="2">
    <location>
        <begin position="176"/>
        <end position="224"/>
    </location>
</feature>
<evidence type="ECO:0000255" key="1"/>
<evidence type="ECO:0000256" key="2">
    <source>
        <dbReference type="SAM" id="MobiDB-lite"/>
    </source>
</evidence>
<evidence type="ECO:0000305" key="3"/>
<name>TMPB_TREPA</name>
<organism>
    <name type="scientific">Treponema pallidum (strain Nichols)</name>
    <dbReference type="NCBI Taxonomy" id="243276"/>
    <lineage>
        <taxon>Bacteria</taxon>
        <taxon>Pseudomonadati</taxon>
        <taxon>Spirochaetota</taxon>
        <taxon>Spirochaetia</taxon>
        <taxon>Spirochaetales</taxon>
        <taxon>Treponemataceae</taxon>
        <taxon>Treponema</taxon>
    </lineage>
</organism>
<dbReference type="EMBL" id="M58562">
    <property type="protein sequence ID" value="AAA27479.1"/>
    <property type="molecule type" value="Genomic_DNA"/>
</dbReference>
<dbReference type="EMBL" id="AE000520">
    <property type="protein sequence ID" value="AAC65737.1"/>
    <property type="molecule type" value="Genomic_DNA"/>
</dbReference>
<dbReference type="EMBL" id="M10931">
    <property type="status" value="NOT_ANNOTATED_CDS"/>
    <property type="molecule type" value="Genomic_DNA"/>
</dbReference>
<dbReference type="PIR" id="F71283">
    <property type="entry name" value="F71283"/>
</dbReference>
<dbReference type="RefSeq" id="WP_010882214.1">
    <property type="nucleotide sequence ID" value="NC_021490.2"/>
</dbReference>
<dbReference type="SMR" id="P19649"/>
<dbReference type="STRING" id="243276.TP_0769"/>
<dbReference type="EnsemblBacteria" id="AAC65737">
    <property type="protein sequence ID" value="AAC65737"/>
    <property type="gene ID" value="TP_0769"/>
</dbReference>
<dbReference type="KEGG" id="tpa:TP_0769"/>
<dbReference type="KEGG" id="tpw:TPANIC_0769"/>
<dbReference type="eggNOG" id="COG1652">
    <property type="taxonomic scope" value="Bacteria"/>
</dbReference>
<dbReference type="HOGENOM" id="CLU_042249_0_0_12"/>
<dbReference type="OrthoDB" id="370541at2"/>
<dbReference type="Proteomes" id="UP000000811">
    <property type="component" value="Chromosome"/>
</dbReference>
<dbReference type="GO" id="GO:0009279">
    <property type="term" value="C:cell outer membrane"/>
    <property type="evidence" value="ECO:0007669"/>
    <property type="project" value="UniProtKB-SubCell"/>
</dbReference>
<dbReference type="InterPro" id="IPR052196">
    <property type="entry name" value="Bact_Kbp"/>
</dbReference>
<dbReference type="PANTHER" id="PTHR34700:SF4">
    <property type="entry name" value="PHAGE-LIKE ELEMENT PBSX PROTEIN XKDP"/>
    <property type="match status" value="1"/>
</dbReference>
<dbReference type="PANTHER" id="PTHR34700">
    <property type="entry name" value="POTASSIUM BINDING PROTEIN KBP"/>
    <property type="match status" value="1"/>
</dbReference>
<keyword id="KW-0998">Cell outer membrane</keyword>
<keyword id="KW-0472">Membrane</keyword>
<keyword id="KW-1185">Reference proteome</keyword>
<keyword id="KW-0677">Repeat</keyword>
<keyword id="KW-0732">Signal</keyword>
<reference key="1">
    <citation type="journal article" date="1991" name="Infect. Immun.">
        <title>Treponema phagedenis encodes and expresses homologs of the Treponema pallidum TmpA and TmpB proteins.</title>
        <authorList>
            <person name="Yelton D.B."/>
            <person name="Limberger R.J."/>
            <person name="Curci K."/>
            <person name="Malinosky-Rummell F."/>
            <person name="Sliviensky L."/>
            <person name="Schouls L.M."/>
            <person name="van Embden J.D.A."/>
            <person name="Charon N.W."/>
        </authorList>
    </citation>
    <scope>NUCLEOTIDE SEQUENCE [GENOMIC DNA]</scope>
    <source>
        <strain>Nichols</strain>
    </source>
</reference>
<reference key="2">
    <citation type="journal article" date="1998" name="Science">
        <title>Complete genome sequence of Treponema pallidum, the syphilis spirochete.</title>
        <authorList>
            <person name="Fraser C.M."/>
            <person name="Norris S.J."/>
            <person name="Weinstock G.M."/>
            <person name="White O."/>
            <person name="Sutton G.G."/>
            <person name="Dodson R.J."/>
            <person name="Gwinn M.L."/>
            <person name="Hickey E.K."/>
            <person name="Clayton R.A."/>
            <person name="Ketchum K.A."/>
            <person name="Sodergren E."/>
            <person name="Hardham J.M."/>
            <person name="McLeod M.P."/>
            <person name="Salzberg S.L."/>
            <person name="Peterson J.D."/>
            <person name="Khalak H.G."/>
            <person name="Richardson D.L."/>
            <person name="Howell J.K."/>
            <person name="Chidambaram M."/>
            <person name="Utterback T.R."/>
            <person name="McDonald L.A."/>
            <person name="Artiach P."/>
            <person name="Bowman C."/>
            <person name="Cotton M.D."/>
            <person name="Fujii C."/>
            <person name="Garland S.A."/>
            <person name="Hatch B."/>
            <person name="Horst K."/>
            <person name="Roberts K.M."/>
            <person name="Sandusky M."/>
            <person name="Weidman J.F."/>
            <person name="Smith H.O."/>
            <person name="Venter J.C."/>
        </authorList>
    </citation>
    <scope>NUCLEOTIDE SEQUENCE [LARGE SCALE GENOMIC DNA]</scope>
    <source>
        <strain>Nichols</strain>
    </source>
</reference>
<reference key="3">
    <citation type="journal article" date="1985" name="J. Bacteriol.">
        <title>Genetic characterization and partial sequence determination of a Treponema pallidum operon expressing two immunogenic membrane proteins in Escherichia coli.</title>
        <authorList>
            <person name="Hansen E.B."/>
            <person name="Pedersen P.E."/>
            <person name="Schouls L.M."/>
            <person name="Severin E."/>
            <person name="van Embden J.D.A."/>
        </authorList>
    </citation>
    <scope>NUCLEOTIDE SEQUENCE [GENOMIC DNA] OF 1-25</scope>
</reference>
<comment type="function">
    <text>Tmp may serve as a porin or transport protein for large molecules.</text>
</comment>
<comment type="subcellular location">
    <subcellularLocation>
        <location>Cell outer membrane</location>
        <topology>Peripheral membrane protein</topology>
    </subcellularLocation>
</comment>
<comment type="similarity">
    <text evidence="3">To T.phagedenis TmpB.</text>
</comment>
<sequence>MKTRNFSLVSALYVLLGVPLFVSAASYDDNEFSRKSRAYSELAEKTYDAGEYDVSAEYARLAEDFAQKSSVYIKETMARTTAEDAMNAARTRHAWAKNERIDRAYPTEYLLASEAIKTGGLAFDSKQYDVALTWARKALDALKNVKPESQLLAKAAKEEAARKAAEARKLEEQRIAAQKAQEERKRAEEEAARKAAEARKLEEQRIAAQKAQEERKRAEEEAARKAAEEAARKAEELEKGRVLPAQYKVTTWSIDRECFWNIAKNPAVYGNPFLWKKLYEANKDKIPQSKNPNWVEPETVLVIPSLKGEEREGLYEPNVKYRPLP</sequence>
<accession>P19649</accession>
<proteinExistence type="inferred from homology"/>
<gene>
    <name type="primary">tmpB</name>
    <name type="ordered locus">TP_0769</name>
</gene>
<protein>
    <recommendedName>
        <fullName>Treponemal membrane protein B</fullName>
    </recommendedName>
    <alternativeName>
        <fullName>Antigen TmpB</fullName>
    </alternativeName>
</protein>